<keyword id="KW-0002">3D-structure</keyword>
<keyword id="KW-0997">Cell inner membrane</keyword>
<keyword id="KW-1003">Cell membrane</keyword>
<keyword id="KW-0472">Membrane</keyword>
<keyword id="KW-0520">NAD</keyword>
<keyword id="KW-0874">Quinone</keyword>
<keyword id="KW-1185">Reference proteome</keyword>
<keyword id="KW-1278">Translocase</keyword>
<keyword id="KW-0812">Transmembrane</keyword>
<keyword id="KW-1133">Transmembrane helix</keyword>
<keyword id="KW-0830">Ubiquinone</keyword>
<sequence length="509" mass="56525">MLLPWLILIPFIGGFLCWQTERFGVKVPRWIALITMGLTLALSLQLWLQGGYSLTQSAGIPQWQSEFDMPWIPRFGISIHLAIDGLSLLMVVLTGLLGVLAVLCSWKEIEKYQGFFHLNLMWILGGVIGVFLAIDMFLFFFFWEMMLVPMYFLIALWGHKASDGKTRITAATKFFIYTQASGLVMLIAILALVFVHYNATGVWTFNYEELLNTPMSSGVEYLLMLGFFIAFAVKMPVVPLHGWLPDAHSQAPTAGSVDLAGILLKTAAYGLLRFSLPLFPNASAEFAPIAMWLGVIGIFYGAWMAFAQTDIKRLIAYTSVSHMGFVLIAIYTGSQLAYQGAVIQMIAHGLSAAGLFILCGQLYERIHTRDMRMMGGLWSKMKWLPALSLFFAVATLGMPGTGNFVGEFMILFGSFQVVPVITVISTFGLVFASVYSLAMLHRAYFGKAKSQIASQELPGMSLRELFMILLLVVLLVLLGFYPQPILDTSHSAIGNIQQWFVNSVTTTRP</sequence>
<organism>
    <name type="scientific">Escherichia coli (strain K12)</name>
    <dbReference type="NCBI Taxonomy" id="83333"/>
    <lineage>
        <taxon>Bacteria</taxon>
        <taxon>Pseudomonadati</taxon>
        <taxon>Pseudomonadota</taxon>
        <taxon>Gammaproteobacteria</taxon>
        <taxon>Enterobacterales</taxon>
        <taxon>Enterobacteriaceae</taxon>
        <taxon>Escherichia</taxon>
    </lineage>
</organism>
<comment type="function">
    <text>NDH-1 shuttles electrons from NADH, via FMN and iron-sulfur (Fe-S) centers, to quinones in the respiratory chain. The immediate electron acceptor for the enzyme in this species is believed to be ubiquinone. Couples the redox reaction to proton translocation (for every two electrons transferred, four hydrogen ions are translocated across the cytoplasmic membrane), and thus conserves the redox energy in a proton gradient.</text>
</comment>
<comment type="catalytic activity">
    <reaction>
        <text>a quinone + NADH + 5 H(+)(in) = a quinol + NAD(+) + 4 H(+)(out)</text>
        <dbReference type="Rhea" id="RHEA:57888"/>
        <dbReference type="ChEBI" id="CHEBI:15378"/>
        <dbReference type="ChEBI" id="CHEBI:24646"/>
        <dbReference type="ChEBI" id="CHEBI:57540"/>
        <dbReference type="ChEBI" id="CHEBI:57945"/>
        <dbReference type="ChEBI" id="CHEBI:132124"/>
    </reaction>
</comment>
<comment type="subunit">
    <text>Composed of 13 different subunits. Subunits NuoA, H, J, K, L, M, N constitute the membrane sector of the complex.</text>
</comment>
<comment type="subcellular location">
    <subcellularLocation>
        <location>Cell inner membrane</location>
        <topology>Multi-pass membrane protein</topology>
    </subcellularLocation>
</comment>
<comment type="similarity">
    <text evidence="2">Belongs to the complex I subunit 4 family.</text>
</comment>
<protein>
    <recommendedName>
        <fullName>NADH-quinone oxidoreductase subunit M</fullName>
        <ecNumber>7.1.1.-</ecNumber>
    </recommendedName>
    <alternativeName>
        <fullName>NADH dehydrogenase I subunit M</fullName>
    </alternativeName>
    <alternativeName>
        <fullName>NDH-1 subunit M</fullName>
    </alternativeName>
    <alternativeName>
        <fullName>NUO13</fullName>
    </alternativeName>
</protein>
<accession>P0AFE8</accession>
<accession>P31978</accession>
<accession>P78248</accession>
<feature type="chain" id="PRO_0000118039" description="NADH-quinone oxidoreductase subunit M">
    <location>
        <begin position="1"/>
        <end position="509"/>
    </location>
</feature>
<feature type="transmembrane region" description="Helical" evidence="1">
    <location>
        <begin position="1"/>
        <end position="21"/>
    </location>
</feature>
<feature type="topological domain" description="Cytoplasmic" evidence="1">
    <location>
        <begin position="22"/>
        <end position="29"/>
    </location>
</feature>
<feature type="transmembrane region" description="Helical" evidence="1">
    <location>
        <begin position="30"/>
        <end position="50"/>
    </location>
</feature>
<feature type="topological domain" description="Periplasmic" evidence="1">
    <location>
        <begin position="51"/>
        <end position="82"/>
    </location>
</feature>
<feature type="transmembrane region" description="Helical" evidence="1">
    <location>
        <begin position="83"/>
        <end position="103"/>
    </location>
</feature>
<feature type="topological domain" description="Cytoplasmic" evidence="1">
    <location>
        <begin position="104"/>
        <end position="121"/>
    </location>
</feature>
<feature type="transmembrane region" description="Helical" evidence="1">
    <location>
        <begin position="122"/>
        <end position="142"/>
    </location>
</feature>
<feature type="topological domain" description="Periplasmic" evidence="1">
    <location>
        <begin position="143"/>
        <end position="173"/>
    </location>
</feature>
<feature type="transmembrane region" description="Helical" evidence="1">
    <location>
        <begin position="174"/>
        <end position="194"/>
    </location>
</feature>
<feature type="topological domain" description="Cytoplasmic" evidence="1">
    <location>
        <begin position="195"/>
        <end position="221"/>
    </location>
</feature>
<feature type="transmembrane region" description="Helical" evidence="1">
    <location>
        <begin position="222"/>
        <end position="242"/>
    </location>
</feature>
<feature type="topological domain" description="Periplasmic" evidence="1">
    <location>
        <begin position="243"/>
        <end position="258"/>
    </location>
</feature>
<feature type="transmembrane region" description="Helical" evidence="1">
    <location>
        <begin position="259"/>
        <end position="279"/>
    </location>
</feature>
<feature type="topological domain" description="Cytoplasmic" evidence="1">
    <location>
        <begin position="280"/>
        <end position="285"/>
    </location>
</feature>
<feature type="transmembrane region" description="Helical" evidence="1">
    <location>
        <begin position="286"/>
        <end position="306"/>
    </location>
</feature>
<feature type="topological domain" description="Periplasmic" evidence="1">
    <location>
        <begin position="307"/>
        <end position="313"/>
    </location>
</feature>
<feature type="transmembrane region" description="Helical" evidence="1">
    <location>
        <begin position="314"/>
        <end position="334"/>
    </location>
</feature>
<feature type="topological domain" description="Cytoplasmic" evidence="1">
    <location>
        <begin position="335"/>
        <end position="339"/>
    </location>
</feature>
<feature type="transmembrane region" description="Helical" evidence="1">
    <location>
        <begin position="340"/>
        <end position="360"/>
    </location>
</feature>
<feature type="topological domain" description="Periplasmic" evidence="1">
    <location>
        <begin position="361"/>
        <end position="382"/>
    </location>
</feature>
<feature type="transmembrane region" description="Helical" evidence="1">
    <location>
        <begin position="383"/>
        <end position="403"/>
    </location>
</feature>
<feature type="transmembrane region" description="Helical" evidence="1">
    <location>
        <begin position="404"/>
        <end position="424"/>
    </location>
</feature>
<feature type="topological domain" description="Periplasmic" evidence="1">
    <location>
        <position position="425"/>
    </location>
</feature>
<feature type="transmembrane region" description="Helical" evidence="1">
    <location>
        <begin position="426"/>
        <end position="446"/>
    </location>
</feature>
<feature type="topological domain" description="Cytoplasmic" evidence="1">
    <location>
        <begin position="447"/>
        <end position="464"/>
    </location>
</feature>
<feature type="transmembrane region" description="Helical" evidence="1">
    <location>
        <begin position="465"/>
        <end position="485"/>
    </location>
</feature>
<feature type="topological domain" description="Periplasmic" evidence="1">
    <location>
        <begin position="486"/>
        <end position="509"/>
    </location>
</feature>
<feature type="sequence conflict" description="In Ref. 1 and 2." evidence="2" ref="1 2">
    <original>EL</original>
    <variation>DV</variation>
    <location>
        <begin position="464"/>
        <end position="465"/>
    </location>
</feature>
<feature type="helix" evidence="7">
    <location>
        <begin position="3"/>
        <end position="19"/>
    </location>
</feature>
<feature type="helix" evidence="7">
    <location>
        <begin position="20"/>
        <end position="23"/>
    </location>
</feature>
<feature type="strand" evidence="5">
    <location>
        <begin position="25"/>
        <end position="27"/>
    </location>
</feature>
<feature type="helix" evidence="7">
    <location>
        <begin position="28"/>
        <end position="50"/>
    </location>
</feature>
<feature type="helix" evidence="4">
    <location>
        <begin position="52"/>
        <end position="54"/>
    </location>
</feature>
<feature type="strand" evidence="7">
    <location>
        <begin position="64"/>
        <end position="72"/>
    </location>
</feature>
<feature type="turn" evidence="7">
    <location>
        <begin position="73"/>
        <end position="76"/>
    </location>
</feature>
<feature type="strand" evidence="7">
    <location>
        <begin position="77"/>
        <end position="83"/>
    </location>
</feature>
<feature type="helix" evidence="7">
    <location>
        <begin position="85"/>
        <end position="104"/>
    </location>
</feature>
<feature type="turn" evidence="7">
    <location>
        <begin position="105"/>
        <end position="107"/>
    </location>
</feature>
<feature type="helix" evidence="7">
    <location>
        <begin position="113"/>
        <end position="132"/>
    </location>
</feature>
<feature type="helix" evidence="7">
    <location>
        <begin position="136"/>
        <end position="145"/>
    </location>
</feature>
<feature type="helix" evidence="7">
    <location>
        <begin position="148"/>
        <end position="157"/>
    </location>
</feature>
<feature type="strand" evidence="7">
    <location>
        <begin position="160"/>
        <end position="162"/>
    </location>
</feature>
<feature type="helix" evidence="7">
    <location>
        <begin position="164"/>
        <end position="199"/>
    </location>
</feature>
<feature type="helix" evidence="7">
    <location>
        <begin position="207"/>
        <end position="210"/>
    </location>
</feature>
<feature type="helix" evidence="7">
    <location>
        <begin position="219"/>
        <end position="234"/>
    </location>
</feature>
<feature type="turn" evidence="7">
    <location>
        <begin position="238"/>
        <end position="242"/>
    </location>
</feature>
<feature type="helix" evidence="7">
    <location>
        <begin position="243"/>
        <end position="249"/>
    </location>
</feature>
<feature type="helix" evidence="7">
    <location>
        <begin position="256"/>
        <end position="261"/>
    </location>
</feature>
<feature type="turn" evidence="3">
    <location>
        <begin position="262"/>
        <end position="264"/>
    </location>
</feature>
<feature type="helix" evidence="7">
    <location>
        <begin position="266"/>
        <end position="273"/>
    </location>
</feature>
<feature type="helix" evidence="7">
    <location>
        <begin position="275"/>
        <end position="278"/>
    </location>
</feature>
<feature type="helix" evidence="7">
    <location>
        <begin position="280"/>
        <end position="307"/>
    </location>
</feature>
<feature type="helix" evidence="7">
    <location>
        <begin position="311"/>
        <end position="330"/>
    </location>
</feature>
<feature type="helix" evidence="7">
    <location>
        <begin position="335"/>
        <end position="366"/>
    </location>
</feature>
<feature type="helix" evidence="7">
    <location>
        <begin position="371"/>
        <end position="373"/>
    </location>
</feature>
<feature type="helix" evidence="7">
    <location>
        <begin position="377"/>
        <end position="379"/>
    </location>
</feature>
<feature type="helix" evidence="7">
    <location>
        <begin position="384"/>
        <end position="395"/>
    </location>
</feature>
<feature type="strand" evidence="6">
    <location>
        <begin position="399"/>
        <end position="401"/>
    </location>
</feature>
<feature type="helix" evidence="7">
    <location>
        <begin position="402"/>
        <end position="417"/>
    </location>
</feature>
<feature type="helix" evidence="7">
    <location>
        <begin position="419"/>
        <end position="443"/>
    </location>
</feature>
<feature type="strand" evidence="4">
    <location>
        <begin position="445"/>
        <end position="447"/>
    </location>
</feature>
<feature type="strand" evidence="7">
    <location>
        <begin position="449"/>
        <end position="451"/>
    </location>
</feature>
<feature type="helix" evidence="7">
    <location>
        <begin position="452"/>
        <end position="454"/>
    </location>
</feature>
<feature type="helix" evidence="7">
    <location>
        <begin position="462"/>
        <end position="480"/>
    </location>
</feature>
<feature type="helix" evidence="7">
    <location>
        <begin position="483"/>
        <end position="502"/>
    </location>
</feature>
<dbReference type="EC" id="7.1.1.-"/>
<dbReference type="EMBL" id="X68301">
    <property type="protein sequence ID" value="CAA48372.1"/>
    <property type="molecule type" value="Genomic_DNA"/>
</dbReference>
<dbReference type="EMBL" id="L19568">
    <property type="protein sequence ID" value="AAA53583.1"/>
    <property type="molecule type" value="Genomic_DNA"/>
</dbReference>
<dbReference type="EMBL" id="U00096">
    <property type="protein sequence ID" value="AAC75337.1"/>
    <property type="molecule type" value="Genomic_DNA"/>
</dbReference>
<dbReference type="EMBL" id="AP009048">
    <property type="protein sequence ID" value="BAA16105.1"/>
    <property type="molecule type" value="Genomic_DNA"/>
</dbReference>
<dbReference type="PIR" id="C64999">
    <property type="entry name" value="C64999"/>
</dbReference>
<dbReference type="RefSeq" id="NP_416780.1">
    <property type="nucleotide sequence ID" value="NC_000913.3"/>
</dbReference>
<dbReference type="RefSeq" id="WP_000926441.1">
    <property type="nucleotide sequence ID" value="NZ_STEB01000008.1"/>
</dbReference>
<dbReference type="PDB" id="7NYH">
    <property type="method" value="EM"/>
    <property type="resolution" value="3.60 A"/>
    <property type="chains" value="M=1-509"/>
</dbReference>
<dbReference type="PDB" id="7NYR">
    <property type="method" value="EM"/>
    <property type="resolution" value="3.30 A"/>
    <property type="chains" value="M=1-509"/>
</dbReference>
<dbReference type="PDB" id="7NYU">
    <property type="method" value="EM"/>
    <property type="resolution" value="3.80 A"/>
    <property type="chains" value="M=1-509"/>
</dbReference>
<dbReference type="PDB" id="7NYV">
    <property type="method" value="EM"/>
    <property type="resolution" value="3.70 A"/>
    <property type="chains" value="M=1-509"/>
</dbReference>
<dbReference type="PDB" id="7P61">
    <property type="method" value="EM"/>
    <property type="resolution" value="3.20 A"/>
    <property type="chains" value="M=1-504"/>
</dbReference>
<dbReference type="PDB" id="7P62">
    <property type="method" value="EM"/>
    <property type="resolution" value="3.60 A"/>
    <property type="chains" value="M=1-504"/>
</dbReference>
<dbReference type="PDB" id="7P63">
    <property type="method" value="EM"/>
    <property type="resolution" value="3.40 A"/>
    <property type="chains" value="M=1-509"/>
</dbReference>
<dbReference type="PDB" id="7P64">
    <property type="method" value="EM"/>
    <property type="resolution" value="2.50 A"/>
    <property type="chains" value="M=1-504"/>
</dbReference>
<dbReference type="PDB" id="7P69">
    <property type="method" value="EM"/>
    <property type="resolution" value="3.00 A"/>
    <property type="chains" value="M=1-504"/>
</dbReference>
<dbReference type="PDB" id="7P7C">
    <property type="method" value="EM"/>
    <property type="resolution" value="2.40 A"/>
    <property type="chains" value="M=1-504"/>
</dbReference>
<dbReference type="PDB" id="7P7E">
    <property type="method" value="EM"/>
    <property type="resolution" value="2.70 A"/>
    <property type="chains" value="M=1-504"/>
</dbReference>
<dbReference type="PDB" id="7P7J">
    <property type="method" value="EM"/>
    <property type="resolution" value="2.70 A"/>
    <property type="chains" value="M=1-504"/>
</dbReference>
<dbReference type="PDB" id="7P7K">
    <property type="method" value="EM"/>
    <property type="resolution" value="3.10 A"/>
    <property type="chains" value="M=1-504"/>
</dbReference>
<dbReference type="PDB" id="7P7L">
    <property type="method" value="EM"/>
    <property type="resolution" value="3.00 A"/>
    <property type="chains" value="M=1-504"/>
</dbReference>
<dbReference type="PDB" id="7P7M">
    <property type="method" value="EM"/>
    <property type="resolution" value="3.20 A"/>
    <property type="chains" value="M=1-504"/>
</dbReference>
<dbReference type="PDB" id="7Z7R">
    <property type="method" value="EM"/>
    <property type="resolution" value="3.36 A"/>
    <property type="chains" value="M=1-509"/>
</dbReference>
<dbReference type="PDB" id="7Z7S">
    <property type="method" value="EM"/>
    <property type="resolution" value="2.40 A"/>
    <property type="chains" value="M=1-509"/>
</dbReference>
<dbReference type="PDB" id="7Z7T">
    <property type="method" value="EM"/>
    <property type="resolution" value="3.10 A"/>
    <property type="chains" value="M=1-509"/>
</dbReference>
<dbReference type="PDB" id="7Z7V">
    <property type="method" value="EM"/>
    <property type="resolution" value="2.29 A"/>
    <property type="chains" value="M=1-509"/>
</dbReference>
<dbReference type="PDB" id="7Z80">
    <property type="method" value="EM"/>
    <property type="resolution" value="2.93 A"/>
    <property type="chains" value="M=1-509"/>
</dbReference>
<dbReference type="PDB" id="7Z83">
    <property type="method" value="EM"/>
    <property type="resolution" value="2.88 A"/>
    <property type="chains" value="M=1-509"/>
</dbReference>
<dbReference type="PDB" id="7Z84">
    <property type="method" value="EM"/>
    <property type="resolution" value="2.87 A"/>
    <property type="chains" value="M=1-509"/>
</dbReference>
<dbReference type="PDB" id="7ZC5">
    <property type="method" value="EM"/>
    <property type="resolution" value="3.00 A"/>
    <property type="chains" value="M=1-509"/>
</dbReference>
<dbReference type="PDB" id="7ZCI">
    <property type="method" value="EM"/>
    <property type="resolution" value="2.69 A"/>
    <property type="chains" value="M=1-509"/>
</dbReference>
<dbReference type="PDBsum" id="7NYH"/>
<dbReference type="PDBsum" id="7NYR"/>
<dbReference type="PDBsum" id="7NYU"/>
<dbReference type="PDBsum" id="7NYV"/>
<dbReference type="PDBsum" id="7P61"/>
<dbReference type="PDBsum" id="7P62"/>
<dbReference type="PDBsum" id="7P63"/>
<dbReference type="PDBsum" id="7P64"/>
<dbReference type="PDBsum" id="7P69"/>
<dbReference type="PDBsum" id="7P7C"/>
<dbReference type="PDBsum" id="7P7E"/>
<dbReference type="PDBsum" id="7P7J"/>
<dbReference type="PDBsum" id="7P7K"/>
<dbReference type="PDBsum" id="7P7L"/>
<dbReference type="PDBsum" id="7P7M"/>
<dbReference type="PDBsum" id="7Z7R"/>
<dbReference type="PDBsum" id="7Z7S"/>
<dbReference type="PDBsum" id="7Z7T"/>
<dbReference type="PDBsum" id="7Z7V"/>
<dbReference type="PDBsum" id="7Z80"/>
<dbReference type="PDBsum" id="7Z83"/>
<dbReference type="PDBsum" id="7Z84"/>
<dbReference type="PDBsum" id="7ZC5"/>
<dbReference type="PDBsum" id="7ZCI"/>
<dbReference type="EMDB" id="EMD-12652"/>
<dbReference type="EMDB" id="EMD-12653"/>
<dbReference type="EMDB" id="EMD-12654"/>
<dbReference type="EMDB" id="EMD-12655"/>
<dbReference type="SMR" id="P0AFE8"/>
<dbReference type="BioGRID" id="4260887">
    <property type="interactions" value="53"/>
</dbReference>
<dbReference type="ComplexPortal" id="CPX-243">
    <property type="entry name" value="Respiratory chain complex I"/>
</dbReference>
<dbReference type="DIP" id="DIP-59255N"/>
<dbReference type="FunCoup" id="P0AFE8">
    <property type="interactions" value="190"/>
</dbReference>
<dbReference type="IntAct" id="P0AFE8">
    <property type="interactions" value="1"/>
</dbReference>
<dbReference type="STRING" id="511145.b2277"/>
<dbReference type="TCDB" id="3.D.1.1.1">
    <property type="family name" value="the h+ or na+-translocating nadh dehydrogenase (ndh) family"/>
</dbReference>
<dbReference type="jPOST" id="P0AFE8"/>
<dbReference type="PaxDb" id="511145-b2277"/>
<dbReference type="DNASU" id="947731"/>
<dbReference type="EnsemblBacteria" id="AAC75337">
    <property type="protein sequence ID" value="AAC75337"/>
    <property type="gene ID" value="b2277"/>
</dbReference>
<dbReference type="GeneID" id="75205677"/>
<dbReference type="GeneID" id="947731"/>
<dbReference type="KEGG" id="ecj:JW2272"/>
<dbReference type="KEGG" id="eco:b2277"/>
<dbReference type="KEGG" id="ecoc:C3026_12710"/>
<dbReference type="PATRIC" id="fig|511145.12.peg.2370"/>
<dbReference type="EchoBASE" id="EB1722"/>
<dbReference type="eggNOG" id="COG1008">
    <property type="taxonomic scope" value="Bacteria"/>
</dbReference>
<dbReference type="HOGENOM" id="CLU_007100_4_4_6"/>
<dbReference type="InParanoid" id="P0AFE8"/>
<dbReference type="OMA" id="ITRWGNQ"/>
<dbReference type="OrthoDB" id="9768329at2"/>
<dbReference type="PhylomeDB" id="P0AFE8"/>
<dbReference type="BioCyc" id="EcoCyc:NUOM-MONOMER"/>
<dbReference type="BioCyc" id="MetaCyc:NUOM-MONOMER"/>
<dbReference type="PRO" id="PR:P0AFE8"/>
<dbReference type="Proteomes" id="UP000000625">
    <property type="component" value="Chromosome"/>
</dbReference>
<dbReference type="GO" id="GO:0016020">
    <property type="term" value="C:membrane"/>
    <property type="evidence" value="ECO:0000314"/>
    <property type="project" value="ComplexPortal"/>
</dbReference>
<dbReference type="GO" id="GO:0030964">
    <property type="term" value="C:NADH dehydrogenase complex"/>
    <property type="evidence" value="ECO:0000314"/>
    <property type="project" value="EcoliWiki"/>
</dbReference>
<dbReference type="GO" id="GO:0005886">
    <property type="term" value="C:plasma membrane"/>
    <property type="evidence" value="ECO:0000314"/>
    <property type="project" value="EcoCyc"/>
</dbReference>
<dbReference type="GO" id="GO:0045271">
    <property type="term" value="C:respiratory chain complex I"/>
    <property type="evidence" value="ECO:0000314"/>
    <property type="project" value="EcoCyc"/>
</dbReference>
<dbReference type="GO" id="GO:0008137">
    <property type="term" value="F:NADH dehydrogenase (ubiquinone) activity"/>
    <property type="evidence" value="ECO:0007669"/>
    <property type="project" value="InterPro"/>
</dbReference>
<dbReference type="GO" id="GO:0048039">
    <property type="term" value="F:ubiquinone binding"/>
    <property type="evidence" value="ECO:0000314"/>
    <property type="project" value="EcoCyc"/>
</dbReference>
<dbReference type="GO" id="GO:0009060">
    <property type="term" value="P:aerobic respiration"/>
    <property type="evidence" value="ECO:0000315"/>
    <property type="project" value="EcoCyc"/>
</dbReference>
<dbReference type="GO" id="GO:0042773">
    <property type="term" value="P:ATP synthesis coupled electron transport"/>
    <property type="evidence" value="ECO:0007669"/>
    <property type="project" value="InterPro"/>
</dbReference>
<dbReference type="GO" id="GO:0015990">
    <property type="term" value="P:electron transport coupled proton transport"/>
    <property type="evidence" value="ECO:0000315"/>
    <property type="project" value="EcoCyc"/>
</dbReference>
<dbReference type="GO" id="GO:0022904">
    <property type="term" value="P:respiratory electron transport chain"/>
    <property type="evidence" value="ECO:0000314"/>
    <property type="project" value="ComplexPortal"/>
</dbReference>
<dbReference type="InterPro" id="IPR010227">
    <property type="entry name" value="NADH_Q_OxRdtase_chainM/4"/>
</dbReference>
<dbReference type="InterPro" id="IPR003918">
    <property type="entry name" value="NADH_UbQ_OxRdtase"/>
</dbReference>
<dbReference type="InterPro" id="IPR001750">
    <property type="entry name" value="ND/Mrp_TM"/>
</dbReference>
<dbReference type="NCBIfam" id="TIGR01972">
    <property type="entry name" value="NDH_I_M"/>
    <property type="match status" value="1"/>
</dbReference>
<dbReference type="NCBIfam" id="NF004498">
    <property type="entry name" value="PRK05846.1-1"/>
    <property type="match status" value="1"/>
</dbReference>
<dbReference type="PANTHER" id="PTHR43507">
    <property type="entry name" value="NADH-UBIQUINONE OXIDOREDUCTASE CHAIN 4"/>
    <property type="match status" value="1"/>
</dbReference>
<dbReference type="PANTHER" id="PTHR43507:SF1">
    <property type="entry name" value="NADH-UBIQUINONE OXIDOREDUCTASE CHAIN 4"/>
    <property type="match status" value="1"/>
</dbReference>
<dbReference type="Pfam" id="PF00361">
    <property type="entry name" value="Proton_antipo_M"/>
    <property type="match status" value="1"/>
</dbReference>
<dbReference type="PRINTS" id="PR01437">
    <property type="entry name" value="NUOXDRDTASE4"/>
</dbReference>
<proteinExistence type="evidence at protein level"/>
<gene>
    <name type="primary">nuoM</name>
    <name type="ordered locus">b2277</name>
    <name type="ordered locus">JW2272</name>
</gene>
<evidence type="ECO:0000255" key="1"/>
<evidence type="ECO:0000305" key="2"/>
<evidence type="ECO:0007829" key="3">
    <source>
        <dbReference type="PDB" id="7NYR"/>
    </source>
</evidence>
<evidence type="ECO:0007829" key="4">
    <source>
        <dbReference type="PDB" id="7P7C"/>
    </source>
</evidence>
<evidence type="ECO:0007829" key="5">
    <source>
        <dbReference type="PDB" id="7P7E"/>
    </source>
</evidence>
<evidence type="ECO:0007829" key="6">
    <source>
        <dbReference type="PDB" id="7Z7R"/>
    </source>
</evidence>
<evidence type="ECO:0007829" key="7">
    <source>
        <dbReference type="PDB" id="7Z7V"/>
    </source>
</evidence>
<name>NUOM_ECOLI</name>
<reference key="1">
    <citation type="journal article" date="1993" name="J. Mol. Biol.">
        <title>The gene locus of the proton-translocating NADH: ubiquinone oxidoreductase in Escherichia coli. Organization of the 14 genes and relationship between the derived proteins and subunits of mitochondrial complex I.</title>
        <authorList>
            <person name="Weidner U."/>
            <person name="Geier S."/>
            <person name="Ptock A."/>
            <person name="Friedrich T."/>
            <person name="Leif H."/>
            <person name="Weiss H."/>
        </authorList>
    </citation>
    <scope>NUCLEOTIDE SEQUENCE [GENOMIC DNA]</scope>
    <source>
        <strain>K12 / AN387</strain>
    </source>
</reference>
<reference key="2">
    <citation type="journal article" date="1993" name="J. Bacteriol.">
        <title>Escherichia coli mutants lacking NADH dehydrogenase I have a competitive disadvantage in stationary phase.</title>
        <authorList>
            <person name="Zambrano M.M."/>
            <person name="Kolter R.G."/>
        </authorList>
    </citation>
    <scope>NUCLEOTIDE SEQUENCE [GENOMIC DNA]</scope>
    <source>
        <strain>K12 / W3110 / ATCC 27325 / DSM 5911</strain>
    </source>
</reference>
<reference key="3">
    <citation type="journal article" date="1997" name="DNA Res.">
        <title>Construction of a contiguous 874-kb sequence of the Escherichia coli-K12 genome corresponding to 50.0-68.8 min on the linkage map and analysis of its sequence features.</title>
        <authorList>
            <person name="Yamamoto Y."/>
            <person name="Aiba H."/>
            <person name="Baba T."/>
            <person name="Hayashi K."/>
            <person name="Inada T."/>
            <person name="Isono K."/>
            <person name="Itoh T."/>
            <person name="Kimura S."/>
            <person name="Kitagawa M."/>
            <person name="Makino K."/>
            <person name="Miki T."/>
            <person name="Mitsuhashi N."/>
            <person name="Mizobuchi K."/>
            <person name="Mori H."/>
            <person name="Nakade S."/>
            <person name="Nakamura Y."/>
            <person name="Nashimoto H."/>
            <person name="Oshima T."/>
            <person name="Oyama S."/>
            <person name="Saito N."/>
            <person name="Sampei G."/>
            <person name="Satoh Y."/>
            <person name="Sivasundaram S."/>
            <person name="Tagami H."/>
            <person name="Takahashi H."/>
            <person name="Takeda J."/>
            <person name="Takemoto K."/>
            <person name="Uehara K."/>
            <person name="Wada C."/>
            <person name="Yamagata S."/>
            <person name="Horiuchi T."/>
        </authorList>
    </citation>
    <scope>NUCLEOTIDE SEQUENCE [LARGE SCALE GENOMIC DNA]</scope>
    <source>
        <strain>K12 / W3110 / ATCC 27325 / DSM 5911</strain>
    </source>
</reference>
<reference key="4">
    <citation type="journal article" date="1997" name="Science">
        <title>The complete genome sequence of Escherichia coli K-12.</title>
        <authorList>
            <person name="Blattner F.R."/>
            <person name="Plunkett G. III"/>
            <person name="Bloch C.A."/>
            <person name="Perna N.T."/>
            <person name="Burland V."/>
            <person name="Riley M."/>
            <person name="Collado-Vides J."/>
            <person name="Glasner J.D."/>
            <person name="Rode C.K."/>
            <person name="Mayhew G.F."/>
            <person name="Gregor J."/>
            <person name="Davis N.W."/>
            <person name="Kirkpatrick H.A."/>
            <person name="Goeden M.A."/>
            <person name="Rose D.J."/>
            <person name="Mau B."/>
            <person name="Shao Y."/>
        </authorList>
    </citation>
    <scope>NUCLEOTIDE SEQUENCE [LARGE SCALE GENOMIC DNA]</scope>
    <source>
        <strain>K12 / MG1655 / ATCC 47076</strain>
    </source>
</reference>
<reference key="5">
    <citation type="journal article" date="2006" name="Mol. Syst. Biol.">
        <title>Highly accurate genome sequences of Escherichia coli K-12 strains MG1655 and W3110.</title>
        <authorList>
            <person name="Hayashi K."/>
            <person name="Morooka N."/>
            <person name="Yamamoto Y."/>
            <person name="Fujita K."/>
            <person name="Isono K."/>
            <person name="Choi S."/>
            <person name="Ohtsubo E."/>
            <person name="Baba T."/>
            <person name="Wanner B.L."/>
            <person name="Mori H."/>
            <person name="Horiuchi T."/>
        </authorList>
    </citation>
    <scope>NUCLEOTIDE SEQUENCE [LARGE SCALE GENOMIC DNA]</scope>
    <source>
        <strain>K12 / W3110 / ATCC 27325 / DSM 5911</strain>
    </source>
</reference>
<reference key="6">
    <citation type="journal article" date="2005" name="Science">
        <title>Global topology analysis of the Escherichia coli inner membrane proteome.</title>
        <authorList>
            <person name="Daley D.O."/>
            <person name="Rapp M."/>
            <person name="Granseth E."/>
            <person name="Melen K."/>
            <person name="Drew D."/>
            <person name="von Heijne G."/>
        </authorList>
    </citation>
    <scope>TOPOLOGY [LARGE SCALE ANALYSIS]</scope>
    <source>
        <strain>K12 / MG1655 / ATCC 47076</strain>
    </source>
</reference>